<organism>
    <name type="scientific">Homo sapiens</name>
    <name type="common">Human</name>
    <dbReference type="NCBI Taxonomy" id="9606"/>
    <lineage>
        <taxon>Eukaryota</taxon>
        <taxon>Metazoa</taxon>
        <taxon>Chordata</taxon>
        <taxon>Craniata</taxon>
        <taxon>Vertebrata</taxon>
        <taxon>Euteleostomi</taxon>
        <taxon>Mammalia</taxon>
        <taxon>Eutheria</taxon>
        <taxon>Euarchontoglires</taxon>
        <taxon>Primates</taxon>
        <taxon>Haplorrhini</taxon>
        <taxon>Catarrhini</taxon>
        <taxon>Hominidae</taxon>
        <taxon>Homo</taxon>
    </lineage>
</organism>
<comment type="function">
    <text evidence="1 2 5 6">Mesodermal transcription factor that plays a key role in somitogenesis and is specifically required for sclerotome development. Required for maintenance of the sclerotome polarity and formation of the cranio-cervical joints (PubMed:23290072, PubMed:24073994). Binds specifically to the promoter of target genes and regulates their expression. Activates expression of NKX3-2 in the sclerotome. Activates expression of CDKN1A and CDKN2A in endothelial cells, acting as a regulator of vascular cell proliferation. While it activates CDKN1A in a DNA-dependent manner, it activates CDKN2A in a DNA-independent manner. Required for hematopoietic stem cell (HSCs) induction via its role in somitogenesis: specification of HSCs occurs via the deployment of a specific endothelial precursor population, which arises within a sub-compartment of the somite named endotome.</text>
</comment>
<comment type="interaction">
    <interactant intactId="EBI-2864512">
        <id>P50221</id>
    </interactant>
    <interactant intactId="EBI-16431307">
        <id>K7EM05</id>
        <label>ACBD4</label>
    </interactant>
    <organismsDiffer>false</organismsDiffer>
    <experiments>3</experiments>
</comment>
<comment type="interaction">
    <interactant intactId="EBI-2864512">
        <id>P50221</id>
    </interactant>
    <interactant intactId="EBI-11954993">
        <id>Q8WYK0</id>
        <label>ACOT12</label>
    </interactant>
    <organismsDiffer>false</organismsDiffer>
    <experiments>3</experiments>
</comment>
<comment type="interaction">
    <interactant intactId="EBI-2864512">
        <id>P50221</id>
    </interactant>
    <interactant intactId="EBI-8643161">
        <id>Q9NX04</id>
        <label>AIRIM</label>
    </interactant>
    <organismsDiffer>false</organismsDiffer>
    <experiments>3</experiments>
</comment>
<comment type="interaction">
    <interactant intactId="EBI-2864512">
        <id>P50221</id>
    </interactant>
    <interactant intactId="EBI-79934">
        <id>P09917</id>
        <label>ALOX5</label>
    </interactant>
    <organismsDiffer>false</organismsDiffer>
    <experiments>3</experiments>
</comment>
<comment type="interaction">
    <interactant intactId="EBI-2864512">
        <id>P50221</id>
    </interactant>
    <interactant intactId="EBI-396211">
        <id>Q9UJX6</id>
        <label>ANAPC2</label>
    </interactant>
    <organismsDiffer>false</organismsDiffer>
    <experiments>3</experiments>
</comment>
<comment type="interaction">
    <interactant intactId="EBI-2864512">
        <id>P50221</id>
    </interactant>
    <interactant intactId="EBI-21535880">
        <id>Q92870-2</id>
        <label>APBB2</label>
    </interactant>
    <organismsDiffer>false</organismsDiffer>
    <experiments>3</experiments>
</comment>
<comment type="interaction">
    <interactant intactId="EBI-2864512">
        <id>P50221</id>
    </interactant>
    <interactant intactId="EBI-741243">
        <id>Q9UKG1</id>
        <label>APPL1</label>
    </interactant>
    <organismsDiffer>false</organismsDiffer>
    <experiments>3</experiments>
</comment>
<comment type="interaction">
    <interactant intactId="EBI-2864512">
        <id>P50221</id>
    </interactant>
    <interactant intactId="EBI-12006308">
        <id>Q7Z3C6-3</id>
        <label>ATG9A</label>
    </interactant>
    <organismsDiffer>false</organismsDiffer>
    <experiments>3</experiments>
</comment>
<comment type="interaction">
    <interactant intactId="EBI-2864512">
        <id>P50221</id>
    </interactant>
    <interactant intactId="EBI-16429704">
        <id>A0A0S2Z5G4</id>
        <label>BANP</label>
    </interactant>
    <organismsDiffer>false</organismsDiffer>
    <experiments>3</experiments>
</comment>
<comment type="interaction">
    <interactant intactId="EBI-2864512">
        <id>P50221</id>
    </interactant>
    <interactant intactId="EBI-16429313">
        <id>B4DE54</id>
        <label>BANP</label>
    </interactant>
    <organismsDiffer>false</organismsDiffer>
    <experiments>3</experiments>
</comment>
<comment type="interaction">
    <interactant intactId="EBI-2864512">
        <id>P50221</id>
    </interactant>
    <interactant intactId="EBI-11524452">
        <id>Q8N9N5-2</id>
        <label>BANP</label>
    </interactant>
    <organismsDiffer>false</organismsDiffer>
    <experiments>3</experiments>
</comment>
<comment type="interaction">
    <interactant intactId="EBI-2864512">
        <id>P50221</id>
    </interactant>
    <interactant intactId="EBI-16429296">
        <id>Q8N9N5-7</id>
        <label>BANP</label>
    </interactant>
    <organismsDiffer>false</organismsDiffer>
    <experiments>3</experiments>
</comment>
<comment type="interaction">
    <interactant intactId="EBI-2864512">
        <id>P50221</id>
    </interactant>
    <interactant intactId="EBI-752094">
        <id>Q12982</id>
        <label>BNIP2</label>
    </interactant>
    <organismsDiffer>false</organismsDiffer>
    <experiments>3</experiments>
</comment>
<comment type="interaction">
    <interactant intactId="EBI-2864512">
        <id>P50221</id>
    </interactant>
    <interactant intactId="EBI-358049">
        <id>Q13895</id>
        <label>BYSL</label>
    </interactant>
    <organismsDiffer>false</organismsDiffer>
    <experiments>3</experiments>
</comment>
<comment type="interaction">
    <interactant intactId="EBI-2864512">
        <id>P50221</id>
    </interactant>
    <interactant intactId="EBI-725606">
        <id>Q9NWQ9</id>
        <label>C14orf119</label>
    </interactant>
    <organismsDiffer>false</organismsDiffer>
    <experiments>3</experiments>
</comment>
<comment type="interaction">
    <interactant intactId="EBI-2864512">
        <id>P50221</id>
    </interactant>
    <interactant intactId="EBI-2874661">
        <id>Q9BV19</id>
        <label>C1orf50</label>
    </interactant>
    <organismsDiffer>false</organismsDiffer>
    <experiments>3</experiments>
</comment>
<comment type="interaction">
    <interactant intactId="EBI-2864512">
        <id>P50221</id>
    </interactant>
    <interactant intactId="EBI-739879">
        <id>Q53TS8</id>
        <label>C2CD6</label>
    </interactant>
    <organismsDiffer>false</organismsDiffer>
    <experiments>3</experiments>
</comment>
<comment type="interaction">
    <interactant intactId="EBI-2864512">
        <id>P50221</id>
    </interactant>
    <interactant intactId="EBI-1184651">
        <id>P54284</id>
        <label>CACNB3</label>
    </interactant>
    <organismsDiffer>false</organismsDiffer>
    <experiments>3</experiments>
</comment>
<comment type="interaction">
    <interactant intactId="EBI-2864512">
        <id>P50221</id>
    </interactant>
    <interactant intactId="EBI-10171570">
        <id>Q68D86</id>
        <label>CCDC102B</label>
    </interactant>
    <organismsDiffer>false</organismsDiffer>
    <experiments>3</experiments>
</comment>
<comment type="interaction">
    <interactant intactId="EBI-2864512">
        <id>P50221</id>
    </interactant>
    <interactant intactId="EBI-10261970">
        <id>Q8IW40</id>
        <label>CCDC103</label>
    </interactant>
    <organismsDiffer>false</organismsDiffer>
    <experiments>3</experiments>
</comment>
<comment type="interaction">
    <interactant intactId="EBI-2864512">
        <id>P50221</id>
    </interactant>
    <interactant intactId="EBI-975634">
        <id>P49427</id>
        <label>CDC34</label>
    </interactant>
    <organismsDiffer>false</organismsDiffer>
    <experiments>3</experiments>
</comment>
<comment type="interaction">
    <interactant intactId="EBI-2864512">
        <id>P50221</id>
    </interactant>
    <interactant intactId="EBI-725145">
        <id>O76071</id>
        <label>CIAO1</label>
    </interactant>
    <organismsDiffer>false</organismsDiffer>
    <experiments>3</experiments>
</comment>
<comment type="interaction">
    <interactant intactId="EBI-2864512">
        <id>P50221</id>
    </interactant>
    <interactant intactId="EBI-10292696">
        <id>Q96Q77</id>
        <label>CIB3</label>
    </interactant>
    <organismsDiffer>false</organismsDiffer>
    <experiments>3</experiments>
</comment>
<comment type="interaction">
    <interactant intactId="EBI-2864512">
        <id>P50221</id>
    </interactant>
    <interactant intactId="EBI-12093053">
        <id>O43247-2</id>
        <label>CIMIP4</label>
    </interactant>
    <organismsDiffer>false</organismsDiffer>
    <experiments>3</experiments>
</comment>
<comment type="interaction">
    <interactant intactId="EBI-2864512">
        <id>P50221</id>
    </interactant>
    <interactant intactId="EBI-456371">
        <id>P61024</id>
        <label>CKS1B</label>
    </interactant>
    <organismsDiffer>false</organismsDiffer>
    <experiments>6</experiments>
</comment>
<comment type="interaction">
    <interactant intactId="EBI-2864512">
        <id>P50221</id>
    </interactant>
    <interactant intactId="EBI-2562014">
        <id>Q9UKZ1</id>
        <label>CNOT11</label>
    </interactant>
    <organismsDiffer>false</organismsDiffer>
    <experiments>3</experiments>
</comment>
<comment type="interaction">
    <interactant intactId="EBI-2864512">
        <id>P50221</id>
    </interactant>
    <interactant intactId="EBI-347804">
        <id>P68400</id>
        <label>CSNK2A1</label>
    </interactant>
    <organismsDiffer>false</organismsDiffer>
    <experiments>3</experiments>
</comment>
<comment type="interaction">
    <interactant intactId="EBI-2864512">
        <id>P50221</id>
    </interactant>
    <interactant intactId="EBI-5453285">
        <id>Q2TBE0</id>
        <label>CWF19L2</label>
    </interactant>
    <organismsDiffer>false</organismsDiffer>
    <experiments>6</experiments>
</comment>
<comment type="interaction">
    <interactant intactId="EBI-2864512">
        <id>P50221</id>
    </interactant>
    <interactant intactId="EBI-8646694">
        <id>O43602</id>
        <label>DCX</label>
    </interactant>
    <organismsDiffer>false</organismsDiffer>
    <experiments>3</experiments>
</comment>
<comment type="interaction">
    <interactant intactId="EBI-2864512">
        <id>P50221</id>
    </interactant>
    <interactant intactId="EBI-14148644">
        <id>O43602-2</id>
        <label>DCX</label>
    </interactant>
    <organismsDiffer>false</organismsDiffer>
    <experiments>3</experiments>
</comment>
<comment type="interaction">
    <interactant intactId="EBI-2864512">
        <id>P50221</id>
    </interactant>
    <interactant intactId="EBI-10976677">
        <id>G5E9A7</id>
        <label>DMWD</label>
    </interactant>
    <organismsDiffer>false</organismsDiffer>
    <experiments>3</experiments>
</comment>
<comment type="interaction">
    <interactant intactId="EBI-2864512">
        <id>P50221</id>
    </interactant>
    <interactant intactId="EBI-1049755">
        <id>P51452</id>
        <label>DUSP3</label>
    </interactant>
    <organismsDiffer>false</organismsDiffer>
    <experiments>3</experiments>
</comment>
<comment type="interaction">
    <interactant intactId="EBI-2864512">
        <id>P50221</id>
    </interactant>
    <interactant intactId="EBI-299104">
        <id>P38919</id>
        <label>EIF4A3</label>
    </interactant>
    <organismsDiffer>false</organismsDiffer>
    <experiments>3</experiments>
</comment>
<comment type="interaction">
    <interactant intactId="EBI-2864512">
        <id>P50221</id>
    </interactant>
    <interactant intactId="EBI-74090">
        <id>Q13541</id>
        <label>EIF4EBP1</label>
    </interactant>
    <organismsDiffer>false</organismsDiffer>
    <experiments>3</experiments>
</comment>
<comment type="interaction">
    <interactant intactId="EBI-2864512">
        <id>P50221</id>
    </interactant>
    <interactant intactId="EBI-489887">
        <id>P50402</id>
        <label>EMD</label>
    </interactant>
    <organismsDiffer>false</organismsDiffer>
    <experiments>3</experiments>
</comment>
<comment type="interaction">
    <interactant intactId="EBI-2864512">
        <id>P50221</id>
    </interactant>
    <interactant intactId="EBI-746252">
        <id>Q96CN9</id>
        <label>GCC1</label>
    </interactant>
    <organismsDiffer>false</organismsDiffer>
    <experiments>3</experiments>
</comment>
<comment type="interaction">
    <interactant intactId="EBI-2864512">
        <id>P50221</id>
    </interactant>
    <interactant intactId="EBI-443648">
        <id>O14893</id>
        <label>GEMIN2</label>
    </interactant>
    <organismsDiffer>false</organismsDiffer>
    <experiments>3</experiments>
</comment>
<comment type="interaction">
    <interactant intactId="EBI-2864512">
        <id>P50221</id>
    </interactant>
    <interactant intactId="EBI-751540">
        <id>O95872</id>
        <label>GPANK1</label>
    </interactant>
    <organismsDiffer>false</organismsDiffer>
    <experiments>3</experiments>
</comment>
<comment type="interaction">
    <interactant intactId="EBI-2864512">
        <id>P50221</id>
    </interactant>
    <interactant intactId="EBI-740553">
        <id>P13807</id>
        <label>GYS1</label>
    </interactant>
    <organismsDiffer>false</organismsDiffer>
    <experiments>3</experiments>
</comment>
<comment type="interaction">
    <interactant intactId="EBI-2864512">
        <id>P50221</id>
    </interactant>
    <interactant intactId="EBI-2549423">
        <id>Q6NT76</id>
        <label>HMBOX1</label>
    </interactant>
    <organismsDiffer>false</organismsDiffer>
    <experiments>3</experiments>
</comment>
<comment type="interaction">
    <interactant intactId="EBI-2864512">
        <id>P50221</id>
    </interactant>
    <interactant intactId="EBI-2214136">
        <id>O15347</id>
        <label>HMGB3</label>
    </interactant>
    <organismsDiffer>false</organismsDiffer>
    <experiments>3</experiments>
</comment>
<comment type="interaction">
    <interactant intactId="EBI-2864512">
        <id>P50221</id>
    </interactant>
    <interactant intactId="EBI-748420">
        <id>Q9NSC5</id>
        <label>HOMER3</label>
    </interactant>
    <organismsDiffer>false</organismsDiffer>
    <experiments>3</experiments>
</comment>
<comment type="interaction">
    <interactant intactId="EBI-2864512">
        <id>P50221</id>
    </interactant>
    <interactant intactId="EBI-1752118">
        <id>P31273</id>
        <label>HOXC8</label>
    </interactant>
    <organismsDiffer>false</organismsDiffer>
    <experiments>3</experiments>
</comment>
<comment type="interaction">
    <interactant intactId="EBI-2864512">
        <id>P50221</id>
    </interactant>
    <interactant intactId="EBI-466029">
        <id>P42858</id>
        <label>HTT</label>
    </interactant>
    <organismsDiffer>false</organismsDiffer>
    <experiments>19</experiments>
</comment>
<comment type="interaction">
    <interactant intactId="EBI-2864512">
        <id>P50221</id>
    </interactant>
    <interactant intactId="EBI-8787606">
        <id>Q8IXS8</id>
        <label>HYCC2</label>
    </interactant>
    <organismsDiffer>false</organismsDiffer>
    <experiments>3</experiments>
</comment>
<comment type="interaction">
    <interactant intactId="EBI-2864512">
        <id>P50221</id>
    </interactant>
    <interactant intactId="EBI-10236940">
        <id>Q15735</id>
        <label>INPP5J</label>
    </interactant>
    <organismsDiffer>false</organismsDiffer>
    <experiments>3</experiments>
</comment>
<comment type="interaction">
    <interactant intactId="EBI-2864512">
        <id>P50221</id>
    </interactant>
    <interactant intactId="EBI-2556193">
        <id>Q63ZY3</id>
        <label>KANK2</label>
    </interactant>
    <organismsDiffer>false</organismsDiffer>
    <experiments>3</experiments>
</comment>
<comment type="interaction">
    <interactant intactId="EBI-2864512">
        <id>P50221</id>
    </interactant>
    <interactant intactId="EBI-11954971">
        <id>Q96MP8-2</id>
        <label>KCTD7</label>
    </interactant>
    <organismsDiffer>false</organismsDiffer>
    <experiments>3</experiments>
</comment>
<comment type="interaction">
    <interactant intactId="EBI-2864512">
        <id>P50221</id>
    </interactant>
    <interactant intactId="EBI-739909">
        <id>Q969R5</id>
        <label>L3MBTL2</label>
    </interactant>
    <organismsDiffer>false</organismsDiffer>
    <experiments>3</experiments>
</comment>
<comment type="interaction">
    <interactant intactId="EBI-2864512">
        <id>P50221</id>
    </interactant>
    <interactant intactId="EBI-713568">
        <id>P45984</id>
        <label>MAPK9</label>
    </interactant>
    <organismsDiffer>false</organismsDiffer>
    <experiments>7</experiments>
</comment>
<comment type="interaction">
    <interactant intactId="EBI-2864512">
        <id>P50221</id>
    </interactant>
    <interactant intactId="EBI-11978579">
        <id>O95983-2</id>
        <label>MBD3</label>
    </interactant>
    <organismsDiffer>false</organismsDiffer>
    <experiments>3</experiments>
</comment>
<comment type="interaction">
    <interactant intactId="EBI-2864512">
        <id>P50221</id>
    </interactant>
    <interactant intactId="EBI-348259">
        <id>Q96EZ8</id>
        <label>MCRS1</label>
    </interactant>
    <organismsDiffer>false</organismsDiffer>
    <experiments>3</experiments>
</comment>
<comment type="interaction">
    <interactant intactId="EBI-2864512">
        <id>P50221</id>
    </interactant>
    <interactant intactId="EBI-16431401">
        <id>Q02078-2</id>
        <label>MEF2A</label>
    </interactant>
    <organismsDiffer>false</organismsDiffer>
    <experiments>3</experiments>
</comment>
<comment type="interaction">
    <interactant intactId="EBI-2864512">
        <id>P50221</id>
    </interactant>
    <interactant intactId="EBI-2340316">
        <id>O15344</id>
        <label>MID1</label>
    </interactant>
    <organismsDiffer>false</organismsDiffer>
    <experiments>7</experiments>
</comment>
<comment type="interaction">
    <interactant intactId="EBI-2864512">
        <id>P50221</id>
    </interactant>
    <interactant intactId="EBI-10172526">
        <id>Q9UJV3-2</id>
        <label>MID2</label>
    </interactant>
    <organismsDiffer>false</organismsDiffer>
    <experiments>3</experiments>
</comment>
<comment type="interaction">
    <interactant intactId="EBI-2864512">
        <id>P50221</id>
    </interactant>
    <interactant intactId="EBI-2340269">
        <id>Q13064</id>
        <label>MKRN3</label>
    </interactant>
    <organismsDiffer>false</organismsDiffer>
    <experiments>3</experiments>
</comment>
<comment type="interaction">
    <interactant intactId="EBI-2864512">
        <id>P50221</id>
    </interactant>
    <interactant intactId="EBI-8852072">
        <id>Q9UH92-3</id>
        <label>MLX</label>
    </interactant>
    <organismsDiffer>false</organismsDiffer>
    <experiments>3</experiments>
</comment>
<comment type="interaction">
    <interactant intactId="EBI-2864512">
        <id>P50221</id>
    </interactant>
    <interactant intactId="EBI-399246">
        <id>Q9UBU8</id>
        <label>MORF4L1</label>
    </interactant>
    <organismsDiffer>false</organismsDiffer>
    <experiments>3</experiments>
</comment>
<comment type="interaction">
    <interactant intactId="EBI-2864512">
        <id>P50221</id>
    </interactant>
    <interactant intactId="EBI-372578">
        <id>Q9UJ70</id>
        <label>NAGK</label>
    </interactant>
    <organismsDiffer>false</organismsDiffer>
    <experiments>3</experiments>
</comment>
<comment type="interaction">
    <interactant intactId="EBI-2864512">
        <id>P50221</id>
    </interactant>
    <interactant intactId="EBI-10249760">
        <id>Q9UHB4</id>
        <label>NDOR1</label>
    </interactant>
    <organismsDiffer>false</organismsDiffer>
    <experiments>3</experiments>
</comment>
<comment type="interaction">
    <interactant intactId="EBI-2864512">
        <id>P50221</id>
    </interactant>
    <interactant intactId="EBI-10281234">
        <id>Q969S2</id>
        <label>NEIL2</label>
    </interactant>
    <organismsDiffer>false</organismsDiffer>
    <experiments>6</experiments>
</comment>
<comment type="interaction">
    <interactant intactId="EBI-2864512">
        <id>P50221</id>
    </interactant>
    <interactant intactId="EBI-9057006">
        <id>Q9UJX0</id>
        <label>OSGIN1</label>
    </interactant>
    <organismsDiffer>false</organismsDiffer>
    <experiments>3</experiments>
</comment>
<comment type="interaction">
    <interactant intactId="EBI-2864512">
        <id>P50221</id>
    </interactant>
    <interactant intactId="EBI-10244544">
        <id>Q5JUK9</id>
        <label>PAGE3</label>
    </interactant>
    <organismsDiffer>false</organismsDiffer>
    <experiments>3</experiments>
</comment>
<comment type="interaction">
    <interactant intactId="EBI-2864512">
        <id>P50221</id>
    </interactant>
    <interactant intactId="EBI-3921217">
        <id>Q9HBI0</id>
        <label>PARVG</label>
    </interactant>
    <organismsDiffer>false</organismsDiffer>
    <experiments>3</experiments>
</comment>
<comment type="interaction">
    <interactant intactId="EBI-2864512">
        <id>P50221</id>
    </interactant>
    <interactant intactId="EBI-12250122">
        <id>Q8IVA1</id>
        <label>PCP2</label>
    </interactant>
    <organismsDiffer>false</organismsDiffer>
    <experiments>3</experiments>
</comment>
<comment type="interaction">
    <interactant intactId="EBI-2864512">
        <id>P50221</id>
    </interactant>
    <interactant intactId="EBI-12169289">
        <id>Q08493-2</id>
        <label>PDE4C</label>
    </interactant>
    <organismsDiffer>false</organismsDiffer>
    <experiments>3</experiments>
</comment>
<comment type="interaction">
    <interactant intactId="EBI-2864512">
        <id>P50221</id>
    </interactant>
    <interactant intactId="EBI-448407">
        <id>Q9HAT8</id>
        <label>PELI2</label>
    </interactant>
    <organismsDiffer>false</organismsDiffer>
    <experiments>3</experiments>
</comment>
<comment type="interaction">
    <interactant intactId="EBI-2864512">
        <id>P50221</id>
    </interactant>
    <interactant intactId="EBI-752057">
        <id>Q7Z412</id>
        <label>PEX26</label>
    </interactant>
    <organismsDiffer>false</organismsDiffer>
    <experiments>3</experiments>
</comment>
<comment type="interaction">
    <interactant intactId="EBI-2864512">
        <id>P50221</id>
    </interactant>
    <interactant intactId="EBI-714158">
        <id>Q13526</id>
        <label>PIN1</label>
    </interactant>
    <organismsDiffer>false</organismsDiffer>
    <experiments>3</experiments>
</comment>
<comment type="interaction">
    <interactant intactId="EBI-2864512">
        <id>P50221</id>
    </interactant>
    <interactant intactId="EBI-748799">
        <id>Q9BRC7</id>
        <label>PLCD4</label>
    </interactant>
    <organismsDiffer>false</organismsDiffer>
    <experiments>3</experiments>
</comment>
<comment type="interaction">
    <interactant intactId="EBI-2864512">
        <id>P50221</id>
    </interactant>
    <interactant intactId="EBI-11339910">
        <id>Q8IYS1</id>
        <label>PM20D2</label>
    </interactant>
    <organismsDiffer>false</organismsDiffer>
    <experiments>3</experiments>
</comment>
<comment type="interaction">
    <interactant intactId="EBI-2864512">
        <id>P50221</id>
    </interactant>
    <interactant intactId="EBI-2855862">
        <id>Q9BT43</id>
        <label>POLR3GL</label>
    </interactant>
    <organismsDiffer>false</organismsDiffer>
    <experiments>3</experiments>
</comment>
<comment type="interaction">
    <interactant intactId="EBI-2864512">
        <id>P50221</id>
    </interactant>
    <interactant intactId="EBI-11993088">
        <id>Q6IPC0</id>
        <label>PPM1F</label>
    </interactant>
    <organismsDiffer>false</organismsDiffer>
    <experiments>3</experiments>
</comment>
<comment type="interaction">
    <interactant intactId="EBI-2864512">
        <id>P50221</id>
    </interactant>
    <interactant intactId="EBI-1181439">
        <id>P54619</id>
        <label>PRKAG1</label>
    </interactant>
    <organismsDiffer>false</organismsDiffer>
    <experiments>3</experiments>
</comment>
<comment type="interaction">
    <interactant intactId="EBI-2864512">
        <id>P50221</id>
    </interactant>
    <interactant intactId="EBI-2798044">
        <id>Q2TAL8</id>
        <label>QRICH1</label>
    </interactant>
    <organismsDiffer>false</organismsDiffer>
    <experiments>3</experiments>
</comment>
<comment type="interaction">
    <interactant intactId="EBI-2864512">
        <id>P50221</id>
    </interactant>
    <interactant intactId="EBI-706448">
        <id>P43351</id>
        <label>RAD52</label>
    </interactant>
    <organismsDiffer>false</organismsDiffer>
    <experiments>3</experiments>
</comment>
<comment type="interaction">
    <interactant intactId="EBI-2864512">
        <id>P50221</id>
    </interactant>
    <interactant intactId="EBI-740773">
        <id>Q96IZ5</id>
        <label>RBM41</label>
    </interactant>
    <organismsDiffer>false</organismsDiffer>
    <experiments>3</experiments>
</comment>
<comment type="interaction">
    <interactant intactId="EBI-2864512">
        <id>P50221</id>
    </interactant>
    <interactant intactId="EBI-714003">
        <id>P52756</id>
        <label>RBM5</label>
    </interactant>
    <organismsDiffer>false</organismsDiffer>
    <experiments>4</experiments>
</comment>
<comment type="interaction">
    <interactant intactId="EBI-2864512">
        <id>P50221</id>
    </interactant>
    <interactant intactId="EBI-727004">
        <id>O00560</id>
        <label>SDCBP</label>
    </interactant>
    <organismsDiffer>false</organismsDiffer>
    <experiments>3</experiments>
</comment>
<comment type="interaction">
    <interactant intactId="EBI-2864512">
        <id>P50221</id>
    </interactant>
    <interactant intactId="EBI-10320311">
        <id>Q9UDX3</id>
        <label>SEC14L4</label>
    </interactant>
    <organismsDiffer>false</organismsDiffer>
    <experiments>3</experiments>
</comment>
<comment type="interaction">
    <interactant intactId="EBI-2864512">
        <id>P50221</id>
    </interactant>
    <interactant intactId="EBI-11959123">
        <id>Q99932-2</id>
        <label>SPAG8</label>
    </interactant>
    <organismsDiffer>false</organismsDiffer>
    <experiments>3</experiments>
</comment>
<comment type="interaction">
    <interactant intactId="EBI-2864512">
        <id>P50221</id>
    </interactant>
    <interactant intactId="EBI-12261246">
        <id>Q8N5J4</id>
        <label>SPIC</label>
    </interactant>
    <organismsDiffer>false</organismsDiffer>
    <experiments>3</experiments>
</comment>
<comment type="interaction">
    <interactant intactId="EBI-2864512">
        <id>P50221</id>
    </interactant>
    <interactant intactId="EBI-5235340">
        <id>Q7Z699</id>
        <label>SPRED1</label>
    </interactant>
    <organismsDiffer>false</organismsDiffer>
    <experiments>3</experiments>
</comment>
<comment type="interaction">
    <interactant intactId="EBI-2864512">
        <id>P50221</id>
    </interactant>
    <interactant intactId="EBI-745392">
        <id>Q9BSW7</id>
        <label>SYT17</label>
    </interactant>
    <organismsDiffer>false</organismsDiffer>
    <experiments>3</experiments>
</comment>
<comment type="interaction">
    <interactant intactId="EBI-2864512">
        <id>P50221</id>
    </interactant>
    <interactant intactId="EBI-954696">
        <id>Q8N8B7</id>
        <label>TCEANC</label>
    </interactant>
    <organismsDiffer>false</organismsDiffer>
    <experiments>3</experiments>
</comment>
<comment type="interaction">
    <interactant intactId="EBI-2864512">
        <id>P50221</id>
    </interactant>
    <interactant intactId="EBI-2555179">
        <id>Q9NUJ3</id>
        <label>TCP11L1</label>
    </interactant>
    <organismsDiffer>false</organismsDiffer>
    <experiments>3</experiments>
</comment>
<comment type="interaction">
    <interactant intactId="EBI-2864512">
        <id>P50221</id>
    </interactant>
    <interactant intactId="EBI-11119202">
        <id>Q9UL33-2</id>
        <label>TRAPPC2L</label>
    </interactant>
    <organismsDiffer>false</organismsDiffer>
    <experiments>3</experiments>
</comment>
<comment type="interaction">
    <interactant intactId="EBI-2864512">
        <id>P50221</id>
    </interactant>
    <interactant intactId="EBI-725997">
        <id>Q8WV44</id>
        <label>TRIM41</label>
    </interactant>
    <organismsDiffer>false</organismsDiffer>
    <experiments>3</experiments>
</comment>
<comment type="interaction">
    <interactant intactId="EBI-2864512">
        <id>P50221</id>
    </interactant>
    <interactant intactId="EBI-11059915">
        <id>Q8N7C3</id>
        <label>TRIML2</label>
    </interactant>
    <organismsDiffer>false</organismsDiffer>
    <experiments>3</experiments>
</comment>
<comment type="interaction">
    <interactant intactId="EBI-2864512">
        <id>P50221</id>
    </interactant>
    <interactant intactId="EBI-6550597">
        <id>Q15642-2</id>
        <label>TRIP10</label>
    </interactant>
    <organismsDiffer>false</organismsDiffer>
    <experiments>3</experiments>
</comment>
<comment type="interaction">
    <interactant intactId="EBI-2864512">
        <id>P50221</id>
    </interactant>
    <interactant intactId="EBI-359793">
        <id>P40222</id>
        <label>TXLNA</label>
    </interactant>
    <organismsDiffer>false</organismsDiffer>
    <experiments>3</experiments>
</comment>
<comment type="interaction">
    <interactant intactId="EBI-2864512">
        <id>P50221</id>
    </interactant>
    <interactant intactId="EBI-10309345">
        <id>Q9NX01</id>
        <label>TXNL4B</label>
    </interactant>
    <organismsDiffer>false</organismsDiffer>
    <experiments>3</experiments>
</comment>
<comment type="interaction">
    <interactant intactId="EBI-2864512">
        <id>P50221</id>
    </interactant>
    <interactant intactId="EBI-2340879">
        <id>Q712K3</id>
        <label>UBE2R2</label>
    </interactant>
    <organismsDiffer>false</organismsDiffer>
    <experiments>6</experiments>
</comment>
<comment type="interaction">
    <interactant intactId="EBI-2864512">
        <id>P50221</id>
    </interactant>
    <interactant intactId="EBI-1993619">
        <id>Q14CS0</id>
        <label>UBXN2B</label>
    </interactant>
    <organismsDiffer>false</organismsDiffer>
    <experiments>3</experiments>
</comment>
<comment type="interaction">
    <interactant intactId="EBI-2864512">
        <id>P50221</id>
    </interactant>
    <interactant intactId="EBI-1993627">
        <id>O94888</id>
        <label>UBXN7</label>
    </interactant>
    <organismsDiffer>false</organismsDiffer>
    <experiments>3</experiments>
</comment>
<comment type="interaction">
    <interactant intactId="EBI-2864512">
        <id>P50221</id>
    </interactant>
    <interactant intactId="EBI-1048763">
        <id>Q9H3U1</id>
        <label>UNC45A</label>
    </interactant>
    <organismsDiffer>false</organismsDiffer>
    <experiments>3</experiments>
</comment>
<comment type="interaction">
    <interactant intactId="EBI-2864512">
        <id>P50221</id>
    </interactant>
    <interactant intactId="EBI-597063">
        <id>Q8TBK6</id>
        <label>ZCCHC10</label>
    </interactant>
    <organismsDiffer>false</organismsDiffer>
    <experiments>3</experiments>
</comment>
<comment type="interaction">
    <interactant intactId="EBI-2864512">
        <id>P50221</id>
    </interactant>
    <interactant intactId="EBI-11741890">
        <id>Q86VK4-3</id>
        <label>ZNF410</label>
    </interactant>
    <organismsDiffer>false</organismsDiffer>
    <experiments>3</experiments>
</comment>
<comment type="interaction">
    <interactant intactId="EBI-2864512">
        <id>P50221</id>
    </interactant>
    <interactant intactId="EBI-10211777">
        <id>A0A384ME25</id>
    </interactant>
    <organismsDiffer>false</organismsDiffer>
    <experiments>3</experiments>
</comment>
<comment type="subcellular location">
    <subcellularLocation>
        <location evidence="2">Nucleus</location>
    </subcellularLocation>
    <subcellularLocation>
        <location evidence="2">Cytoplasm</location>
    </subcellularLocation>
    <text evidence="2">Localizes predominantly in the nucleus.</text>
</comment>
<comment type="alternative products">
    <event type="alternative splicing"/>
    <isoform>
        <id>P50221-1</id>
        <name>1</name>
        <sequence type="displayed"/>
    </isoform>
    <isoform>
        <id>P50221-2</id>
        <name>2</name>
        <sequence type="described" ref="VSP_043340"/>
    </isoform>
    <isoform>
        <id>P50221-3</id>
        <name>3</name>
        <sequence type="described" ref="VSP_046700"/>
    </isoform>
</comment>
<comment type="disease" evidence="5 6">
    <disease id="DI-03989">
        <name>Klippel-Feil syndrome 2, autosomal recessive</name>
        <acronym>KFS2</acronym>
        <description>A skeletal disorder characterized by congenital fusion of cervical vertebrae. It is due to a failure in the normal segmentation of vertebrae during the early weeks of fetal development. The clinical triad consists of short neck, low posterior hairline, and limited neck movement.</description>
        <dbReference type="MIM" id="214300"/>
    </disease>
    <text>The disease is caused by variants affecting the gene represented in this entry.</text>
</comment>
<gene>
    <name type="primary">MEOX1</name>
    <name type="synonym">MOX1</name>
</gene>
<protein>
    <recommendedName>
        <fullName>Homeobox protein MOX-1</fullName>
    </recommendedName>
    <alternativeName>
        <fullName>Mesenchyme homeobox 1</fullName>
    </alternativeName>
</protein>
<evidence type="ECO:0000250" key="1">
    <source>
        <dbReference type="UniProtKB" id="F1Q4R9"/>
    </source>
</evidence>
<evidence type="ECO:0000250" key="2">
    <source>
        <dbReference type="UniProtKB" id="P32442"/>
    </source>
</evidence>
<evidence type="ECO:0000255" key="3">
    <source>
        <dbReference type="PROSITE-ProRule" id="PRU00108"/>
    </source>
</evidence>
<evidence type="ECO:0000256" key="4">
    <source>
        <dbReference type="SAM" id="MobiDB-lite"/>
    </source>
</evidence>
<evidence type="ECO:0000269" key="5">
    <source>
    </source>
</evidence>
<evidence type="ECO:0000269" key="6">
    <source>
    </source>
</evidence>
<evidence type="ECO:0000303" key="7">
    <source>
    </source>
</evidence>
<evidence type="ECO:0000305" key="8"/>
<feature type="chain" id="PRO_0000049195" description="Homeobox protein MOX-1">
    <location>
        <begin position="1"/>
        <end position="254"/>
    </location>
</feature>
<feature type="DNA-binding region" description="Homeobox" evidence="3">
    <location>
        <begin position="171"/>
        <end position="230"/>
    </location>
</feature>
<feature type="region of interest" description="Disordered" evidence="4">
    <location>
        <begin position="86"/>
        <end position="178"/>
    </location>
</feature>
<feature type="region of interest" description="Disordered" evidence="4">
    <location>
        <begin position="227"/>
        <end position="254"/>
    </location>
</feature>
<feature type="compositionally biased region" description="Basic and acidic residues" evidence="4">
    <location>
        <begin position="154"/>
        <end position="178"/>
    </location>
</feature>
<feature type="splice variant" id="VSP_046700" description="In isoform 3." evidence="8">
    <location>
        <begin position="1"/>
        <end position="115"/>
    </location>
</feature>
<feature type="splice variant" id="VSP_043340" description="In isoform 2." evidence="7">
    <original>DNQENRGKPEGSSKARKERTAFTKEQLRELEAEFAHHNYLTRLRRYEIAVNLDLSERQVKVWFQNRRMKWKRVKGGQPISPNGQDPEDGDSTASPSSE</original>
    <variation>GQSVVPEPKDEVEACEGRSAHLPQWAGP</variation>
    <location>
        <begin position="157"/>
        <end position="254"/>
    </location>
</feature>
<feature type="sequence variant" id="VAR_049584" description="In dbSNP:rs9898682.">
    <original>S</original>
    <variation>L</variation>
    <location>
        <position position="27"/>
    </location>
</feature>
<feature type="sequence conflict" description="In Ref. 2; BAF83828." ref="2">
    <original>A</original>
    <variation>G</variation>
    <location>
        <position position="69"/>
    </location>
</feature>
<name>MEOX1_HUMAN</name>
<dbReference type="EMBL" id="U10492">
    <property type="protein sequence ID" value="AAA19983.1"/>
    <property type="molecule type" value="mRNA"/>
</dbReference>
<dbReference type="EMBL" id="U10493">
    <property type="protein sequence ID" value="AAA19984.1"/>
    <property type="molecule type" value="mRNA"/>
</dbReference>
<dbReference type="EMBL" id="AK291139">
    <property type="protein sequence ID" value="BAF83828.1"/>
    <property type="molecule type" value="mRNA"/>
</dbReference>
<dbReference type="EMBL" id="AC004149">
    <property type="status" value="NOT_ANNOTATED_CDS"/>
    <property type="molecule type" value="Genomic_DNA"/>
</dbReference>
<dbReference type="EMBL" id="AC068675">
    <property type="status" value="NOT_ANNOTATED_CDS"/>
    <property type="molecule type" value="Genomic_DNA"/>
</dbReference>
<dbReference type="EMBL" id="CH471178">
    <property type="protein sequence ID" value="EAW51672.1"/>
    <property type="molecule type" value="Genomic_DNA"/>
</dbReference>
<dbReference type="EMBL" id="BC069474">
    <property type="protein sequence ID" value="AAH69474.1"/>
    <property type="molecule type" value="mRNA"/>
</dbReference>
<dbReference type="EMBL" id="BC069506">
    <property type="protein sequence ID" value="AAH69506.1"/>
    <property type="molecule type" value="mRNA"/>
</dbReference>
<dbReference type="CCDS" id="CCDS11466.1">
    <molecule id="P50221-1"/>
</dbReference>
<dbReference type="CCDS" id="CCDS11467.1">
    <molecule id="P50221-2"/>
</dbReference>
<dbReference type="CCDS" id="CCDS42343.1">
    <molecule id="P50221-3"/>
</dbReference>
<dbReference type="PIR" id="I38034">
    <property type="entry name" value="I38034"/>
</dbReference>
<dbReference type="RefSeq" id="NP_001035091.1">
    <molecule id="P50221-3"/>
    <property type="nucleotide sequence ID" value="NM_001040002.2"/>
</dbReference>
<dbReference type="RefSeq" id="NP_004518.1">
    <molecule id="P50221-1"/>
    <property type="nucleotide sequence ID" value="NM_004527.4"/>
</dbReference>
<dbReference type="RefSeq" id="NP_054705.1">
    <molecule id="P50221-2"/>
    <property type="nucleotide sequence ID" value="NM_013999.4"/>
</dbReference>
<dbReference type="SMR" id="P50221"/>
<dbReference type="BioGRID" id="110385">
    <property type="interactions" value="105"/>
</dbReference>
<dbReference type="FunCoup" id="P50221">
    <property type="interactions" value="991"/>
</dbReference>
<dbReference type="IntAct" id="P50221">
    <property type="interactions" value="108"/>
</dbReference>
<dbReference type="MINT" id="P50221"/>
<dbReference type="STRING" id="9606.ENSP00000321684"/>
<dbReference type="GlyGen" id="P50221">
    <property type="glycosylation" value="1 site, 1 O-linked glycan (1 site)"/>
</dbReference>
<dbReference type="iPTMnet" id="P50221"/>
<dbReference type="PhosphoSitePlus" id="P50221"/>
<dbReference type="BioMuta" id="MEOX1"/>
<dbReference type="DMDM" id="1709078"/>
<dbReference type="jPOST" id="P50221"/>
<dbReference type="MassIVE" id="P50221"/>
<dbReference type="PaxDb" id="9606-ENSP00000321684"/>
<dbReference type="PeptideAtlas" id="P50221"/>
<dbReference type="ProteomicsDB" id="2245"/>
<dbReference type="ProteomicsDB" id="56204">
    <molecule id="P50221-1"/>
</dbReference>
<dbReference type="Antibodypedia" id="17286">
    <property type="antibodies" value="424 antibodies from 31 providers"/>
</dbReference>
<dbReference type="DNASU" id="4222"/>
<dbReference type="Ensembl" id="ENST00000318579.9">
    <molecule id="P50221-1"/>
    <property type="protein sequence ID" value="ENSP00000321684.4"/>
    <property type="gene ID" value="ENSG00000005102.14"/>
</dbReference>
<dbReference type="Ensembl" id="ENST00000393661.2">
    <molecule id="P50221-3"/>
    <property type="protein sequence ID" value="ENSP00000377271.2"/>
    <property type="gene ID" value="ENSG00000005102.14"/>
</dbReference>
<dbReference type="Ensembl" id="ENST00000549132.2">
    <molecule id="P50221-2"/>
    <property type="protein sequence ID" value="ENSP00000449049.2"/>
    <property type="gene ID" value="ENSG00000005102.14"/>
</dbReference>
<dbReference type="GeneID" id="4222"/>
<dbReference type="KEGG" id="hsa:4222"/>
<dbReference type="MANE-Select" id="ENST00000318579.9">
    <property type="protein sequence ID" value="ENSP00000321684.4"/>
    <property type="RefSeq nucleotide sequence ID" value="NM_004527.4"/>
    <property type="RefSeq protein sequence ID" value="NP_004518.1"/>
</dbReference>
<dbReference type="UCSC" id="uc002idz.4">
    <molecule id="P50221-1"/>
    <property type="organism name" value="human"/>
</dbReference>
<dbReference type="AGR" id="HGNC:7013"/>
<dbReference type="CTD" id="4222"/>
<dbReference type="DisGeNET" id="4222"/>
<dbReference type="GeneCards" id="MEOX1"/>
<dbReference type="HGNC" id="HGNC:7013">
    <property type="gene designation" value="MEOX1"/>
</dbReference>
<dbReference type="HPA" id="ENSG00000005102">
    <property type="expression patterns" value="Tissue enhanced (adipose tissue, breast, heart muscle)"/>
</dbReference>
<dbReference type="MalaCards" id="MEOX1"/>
<dbReference type="MIM" id="214300">
    <property type="type" value="phenotype"/>
</dbReference>
<dbReference type="MIM" id="600147">
    <property type="type" value="gene"/>
</dbReference>
<dbReference type="neXtProt" id="NX_P50221"/>
<dbReference type="OpenTargets" id="ENSG00000005102"/>
<dbReference type="Orphanet" id="2345">
    <property type="disease" value="Isolated Klippel-Feil syndrome"/>
</dbReference>
<dbReference type="PharmGKB" id="PA30747"/>
<dbReference type="VEuPathDB" id="HostDB:ENSG00000005102"/>
<dbReference type="eggNOG" id="KOG0489">
    <property type="taxonomic scope" value="Eukaryota"/>
</dbReference>
<dbReference type="GeneTree" id="ENSGT00940000154018"/>
<dbReference type="HOGENOM" id="CLU_081326_1_0_1"/>
<dbReference type="InParanoid" id="P50221"/>
<dbReference type="OMA" id="HAPSILW"/>
<dbReference type="OrthoDB" id="6159439at2759"/>
<dbReference type="PAN-GO" id="P50221">
    <property type="GO annotations" value="5 GO annotations based on evolutionary models"/>
</dbReference>
<dbReference type="PhylomeDB" id="P50221"/>
<dbReference type="TreeFam" id="TF351603"/>
<dbReference type="PathwayCommons" id="P50221"/>
<dbReference type="SignaLink" id="P50221"/>
<dbReference type="SIGNOR" id="P50221"/>
<dbReference type="BioGRID-ORCS" id="4222">
    <property type="hits" value="10 hits in 1167 CRISPR screens"/>
</dbReference>
<dbReference type="GeneWiki" id="MEOX1"/>
<dbReference type="GenomeRNAi" id="4222"/>
<dbReference type="Pharos" id="P50221">
    <property type="development level" value="Tbio"/>
</dbReference>
<dbReference type="PRO" id="PR:P50221"/>
<dbReference type="Proteomes" id="UP000005640">
    <property type="component" value="Chromosome 17"/>
</dbReference>
<dbReference type="RNAct" id="P50221">
    <property type="molecule type" value="protein"/>
</dbReference>
<dbReference type="Bgee" id="ENSG00000005102">
    <property type="expression patterns" value="Expressed in tendon of biceps brachii and 137 other cell types or tissues"/>
</dbReference>
<dbReference type="GO" id="GO:0000785">
    <property type="term" value="C:chromatin"/>
    <property type="evidence" value="ECO:0000247"/>
    <property type="project" value="NTNU_SB"/>
</dbReference>
<dbReference type="GO" id="GO:0005737">
    <property type="term" value="C:cytoplasm"/>
    <property type="evidence" value="ECO:0000250"/>
    <property type="project" value="UniProtKB"/>
</dbReference>
<dbReference type="GO" id="GO:0005634">
    <property type="term" value="C:nucleus"/>
    <property type="evidence" value="ECO:0000250"/>
    <property type="project" value="UniProtKB"/>
</dbReference>
<dbReference type="GO" id="GO:0003682">
    <property type="term" value="F:chromatin binding"/>
    <property type="evidence" value="ECO:0007669"/>
    <property type="project" value="Ensembl"/>
</dbReference>
<dbReference type="GO" id="GO:0001228">
    <property type="term" value="F:DNA-binding transcription activator activity, RNA polymerase II-specific"/>
    <property type="evidence" value="ECO:0007669"/>
    <property type="project" value="Ensembl"/>
</dbReference>
<dbReference type="GO" id="GO:0003700">
    <property type="term" value="F:DNA-binding transcription factor activity"/>
    <property type="evidence" value="ECO:0000250"/>
    <property type="project" value="UniProtKB"/>
</dbReference>
<dbReference type="GO" id="GO:0000981">
    <property type="term" value="F:DNA-binding transcription factor activity, RNA polymerase II-specific"/>
    <property type="evidence" value="ECO:0000247"/>
    <property type="project" value="NTNU_SB"/>
</dbReference>
<dbReference type="GO" id="GO:0071837">
    <property type="term" value="F:HMG box domain binding"/>
    <property type="evidence" value="ECO:0007669"/>
    <property type="project" value="Ensembl"/>
</dbReference>
<dbReference type="GO" id="GO:0000978">
    <property type="term" value="F:RNA polymerase II cis-regulatory region sequence-specific DNA binding"/>
    <property type="evidence" value="ECO:0000318"/>
    <property type="project" value="GO_Central"/>
</dbReference>
<dbReference type="GO" id="GO:0043565">
    <property type="term" value="F:sequence-specific DNA binding"/>
    <property type="evidence" value="ECO:0000250"/>
    <property type="project" value="UniProtKB"/>
</dbReference>
<dbReference type="GO" id="GO:1990837">
    <property type="term" value="F:sequence-specific double-stranded DNA binding"/>
    <property type="evidence" value="ECO:0000314"/>
    <property type="project" value="ARUK-UCL"/>
</dbReference>
<dbReference type="GO" id="GO:0060218">
    <property type="term" value="P:hematopoietic stem cell differentiation"/>
    <property type="evidence" value="ECO:0000250"/>
    <property type="project" value="UniProtKB"/>
</dbReference>
<dbReference type="GO" id="GO:0006357">
    <property type="term" value="P:regulation of transcription by RNA polymerase II"/>
    <property type="evidence" value="ECO:0000318"/>
    <property type="project" value="GO_Central"/>
</dbReference>
<dbReference type="GO" id="GO:0061056">
    <property type="term" value="P:sclerotome development"/>
    <property type="evidence" value="ECO:0000250"/>
    <property type="project" value="UniProtKB"/>
</dbReference>
<dbReference type="GO" id="GO:0061053">
    <property type="term" value="P:somite development"/>
    <property type="evidence" value="ECO:0000250"/>
    <property type="project" value="UniProtKB"/>
</dbReference>
<dbReference type="GO" id="GO:0001757">
    <property type="term" value="P:somite specification"/>
    <property type="evidence" value="ECO:0007669"/>
    <property type="project" value="Ensembl"/>
</dbReference>
<dbReference type="CDD" id="cd00086">
    <property type="entry name" value="homeodomain"/>
    <property type="match status" value="1"/>
</dbReference>
<dbReference type="FunFam" id="1.10.10.60:FF:000109">
    <property type="entry name" value="Homeobox protein MOX-2"/>
    <property type="match status" value="1"/>
</dbReference>
<dbReference type="Gene3D" id="1.10.10.60">
    <property type="entry name" value="Homeodomain-like"/>
    <property type="match status" value="1"/>
</dbReference>
<dbReference type="InterPro" id="IPR001356">
    <property type="entry name" value="HD"/>
</dbReference>
<dbReference type="InterPro" id="IPR020479">
    <property type="entry name" value="HD_metazoa"/>
</dbReference>
<dbReference type="InterPro" id="IPR017970">
    <property type="entry name" value="Homeobox_CS"/>
</dbReference>
<dbReference type="InterPro" id="IPR009057">
    <property type="entry name" value="Homeodomain-like_sf"/>
</dbReference>
<dbReference type="InterPro" id="IPR042634">
    <property type="entry name" value="MOX-1/MOX-2"/>
</dbReference>
<dbReference type="PANTHER" id="PTHR24328">
    <property type="entry name" value="HOMEOBOX PROTEIN MOX"/>
    <property type="match status" value="1"/>
</dbReference>
<dbReference type="PANTHER" id="PTHR24328:SF8">
    <property type="entry name" value="HOMEOBOX PROTEIN MOX-1"/>
    <property type="match status" value="1"/>
</dbReference>
<dbReference type="Pfam" id="PF00046">
    <property type="entry name" value="Homeodomain"/>
    <property type="match status" value="1"/>
</dbReference>
<dbReference type="PRINTS" id="PR00024">
    <property type="entry name" value="HOMEOBOX"/>
</dbReference>
<dbReference type="SMART" id="SM00389">
    <property type="entry name" value="HOX"/>
    <property type="match status" value="1"/>
</dbReference>
<dbReference type="SUPFAM" id="SSF46689">
    <property type="entry name" value="Homeodomain-like"/>
    <property type="match status" value="1"/>
</dbReference>
<dbReference type="PROSITE" id="PS00027">
    <property type="entry name" value="HOMEOBOX_1"/>
    <property type="match status" value="1"/>
</dbReference>
<dbReference type="PROSITE" id="PS50071">
    <property type="entry name" value="HOMEOBOX_2"/>
    <property type="match status" value="1"/>
</dbReference>
<reference key="1">
    <citation type="journal article" date="1994" name="Hum. Mol. Genet.">
        <title>Isolation of a diverged homeobox gene, MOX1, from the BRCA1 region on 17q21 by solution hybrid capture.</title>
        <authorList>
            <person name="Futreal P.A."/>
            <person name="Cochran C."/>
            <person name="Rosenthal J."/>
            <person name="Miki Y."/>
            <person name="Swenson J."/>
            <person name="Hobbs M."/>
            <person name="Bennett L.M."/>
            <person name="Haugen-Strano A."/>
            <person name="Marks J."/>
            <person name="Barrett J.C."/>
            <person name="Tavtigian S.V."/>
            <person name="Shattuck-Eidens D."/>
            <person name="Kamb A."/>
            <person name="Skolnick M."/>
            <person name="Wiseman R.W."/>
        </authorList>
    </citation>
    <scope>NUCLEOTIDE SEQUENCE [MRNA] (ISOFORMS 1 AND 2)</scope>
    <source>
        <tissue>Mammary gland</tissue>
    </source>
</reference>
<reference key="2">
    <citation type="journal article" date="2004" name="Nat. Genet.">
        <title>Complete sequencing and characterization of 21,243 full-length human cDNAs.</title>
        <authorList>
            <person name="Ota T."/>
            <person name="Suzuki Y."/>
            <person name="Nishikawa T."/>
            <person name="Otsuki T."/>
            <person name="Sugiyama T."/>
            <person name="Irie R."/>
            <person name="Wakamatsu A."/>
            <person name="Hayashi K."/>
            <person name="Sato H."/>
            <person name="Nagai K."/>
            <person name="Kimura K."/>
            <person name="Makita H."/>
            <person name="Sekine M."/>
            <person name="Obayashi M."/>
            <person name="Nishi T."/>
            <person name="Shibahara T."/>
            <person name="Tanaka T."/>
            <person name="Ishii S."/>
            <person name="Yamamoto J."/>
            <person name="Saito K."/>
            <person name="Kawai Y."/>
            <person name="Isono Y."/>
            <person name="Nakamura Y."/>
            <person name="Nagahari K."/>
            <person name="Murakami K."/>
            <person name="Yasuda T."/>
            <person name="Iwayanagi T."/>
            <person name="Wagatsuma M."/>
            <person name="Shiratori A."/>
            <person name="Sudo H."/>
            <person name="Hosoiri T."/>
            <person name="Kaku Y."/>
            <person name="Kodaira H."/>
            <person name="Kondo H."/>
            <person name="Sugawara M."/>
            <person name="Takahashi M."/>
            <person name="Kanda K."/>
            <person name="Yokoi T."/>
            <person name="Furuya T."/>
            <person name="Kikkawa E."/>
            <person name="Omura Y."/>
            <person name="Abe K."/>
            <person name="Kamihara K."/>
            <person name="Katsuta N."/>
            <person name="Sato K."/>
            <person name="Tanikawa M."/>
            <person name="Yamazaki M."/>
            <person name="Ninomiya K."/>
            <person name="Ishibashi T."/>
            <person name="Yamashita H."/>
            <person name="Murakawa K."/>
            <person name="Fujimori K."/>
            <person name="Tanai H."/>
            <person name="Kimata M."/>
            <person name="Watanabe M."/>
            <person name="Hiraoka S."/>
            <person name="Chiba Y."/>
            <person name="Ishida S."/>
            <person name="Ono Y."/>
            <person name="Takiguchi S."/>
            <person name="Watanabe S."/>
            <person name="Yosida M."/>
            <person name="Hotuta T."/>
            <person name="Kusano J."/>
            <person name="Kanehori K."/>
            <person name="Takahashi-Fujii A."/>
            <person name="Hara H."/>
            <person name="Tanase T.-O."/>
            <person name="Nomura Y."/>
            <person name="Togiya S."/>
            <person name="Komai F."/>
            <person name="Hara R."/>
            <person name="Takeuchi K."/>
            <person name="Arita M."/>
            <person name="Imose N."/>
            <person name="Musashino K."/>
            <person name="Yuuki H."/>
            <person name="Oshima A."/>
            <person name="Sasaki N."/>
            <person name="Aotsuka S."/>
            <person name="Yoshikawa Y."/>
            <person name="Matsunawa H."/>
            <person name="Ichihara T."/>
            <person name="Shiohata N."/>
            <person name="Sano S."/>
            <person name="Moriya S."/>
            <person name="Momiyama H."/>
            <person name="Satoh N."/>
            <person name="Takami S."/>
            <person name="Terashima Y."/>
            <person name="Suzuki O."/>
            <person name="Nakagawa S."/>
            <person name="Senoh A."/>
            <person name="Mizoguchi H."/>
            <person name="Goto Y."/>
            <person name="Shimizu F."/>
            <person name="Wakebe H."/>
            <person name="Hishigaki H."/>
            <person name="Watanabe T."/>
            <person name="Sugiyama A."/>
            <person name="Takemoto M."/>
            <person name="Kawakami B."/>
            <person name="Yamazaki M."/>
            <person name="Watanabe K."/>
            <person name="Kumagai A."/>
            <person name="Itakura S."/>
            <person name="Fukuzumi Y."/>
            <person name="Fujimori Y."/>
            <person name="Komiyama M."/>
            <person name="Tashiro H."/>
            <person name="Tanigami A."/>
            <person name="Fujiwara T."/>
            <person name="Ono T."/>
            <person name="Yamada K."/>
            <person name="Fujii Y."/>
            <person name="Ozaki K."/>
            <person name="Hirao M."/>
            <person name="Ohmori Y."/>
            <person name="Kawabata A."/>
            <person name="Hikiji T."/>
            <person name="Kobatake N."/>
            <person name="Inagaki H."/>
            <person name="Ikema Y."/>
            <person name="Okamoto S."/>
            <person name="Okitani R."/>
            <person name="Kawakami T."/>
            <person name="Noguchi S."/>
            <person name="Itoh T."/>
            <person name="Shigeta K."/>
            <person name="Senba T."/>
            <person name="Matsumura K."/>
            <person name="Nakajima Y."/>
            <person name="Mizuno T."/>
            <person name="Morinaga M."/>
            <person name="Sasaki M."/>
            <person name="Togashi T."/>
            <person name="Oyama M."/>
            <person name="Hata H."/>
            <person name="Watanabe M."/>
            <person name="Komatsu T."/>
            <person name="Mizushima-Sugano J."/>
            <person name="Satoh T."/>
            <person name="Shirai Y."/>
            <person name="Takahashi Y."/>
            <person name="Nakagawa K."/>
            <person name="Okumura K."/>
            <person name="Nagase T."/>
            <person name="Nomura N."/>
            <person name="Kikuchi H."/>
            <person name="Masuho Y."/>
            <person name="Yamashita R."/>
            <person name="Nakai K."/>
            <person name="Yada T."/>
            <person name="Nakamura Y."/>
            <person name="Ohara O."/>
            <person name="Isogai T."/>
            <person name="Sugano S."/>
        </authorList>
    </citation>
    <scope>NUCLEOTIDE SEQUENCE [LARGE SCALE MRNA]</scope>
</reference>
<reference key="3">
    <citation type="journal article" date="2006" name="Nature">
        <title>DNA sequence of human chromosome 17 and analysis of rearrangement in the human lineage.</title>
        <authorList>
            <person name="Zody M.C."/>
            <person name="Garber M."/>
            <person name="Adams D.J."/>
            <person name="Sharpe T."/>
            <person name="Harrow J."/>
            <person name="Lupski J.R."/>
            <person name="Nicholson C."/>
            <person name="Searle S.M."/>
            <person name="Wilming L."/>
            <person name="Young S.K."/>
            <person name="Abouelleil A."/>
            <person name="Allen N.R."/>
            <person name="Bi W."/>
            <person name="Bloom T."/>
            <person name="Borowsky M.L."/>
            <person name="Bugalter B.E."/>
            <person name="Butler J."/>
            <person name="Chang J.L."/>
            <person name="Chen C.-K."/>
            <person name="Cook A."/>
            <person name="Corum B."/>
            <person name="Cuomo C.A."/>
            <person name="de Jong P.J."/>
            <person name="DeCaprio D."/>
            <person name="Dewar K."/>
            <person name="FitzGerald M."/>
            <person name="Gilbert J."/>
            <person name="Gibson R."/>
            <person name="Gnerre S."/>
            <person name="Goldstein S."/>
            <person name="Grafham D.V."/>
            <person name="Grocock R."/>
            <person name="Hafez N."/>
            <person name="Hagopian D.S."/>
            <person name="Hart E."/>
            <person name="Norman C.H."/>
            <person name="Humphray S."/>
            <person name="Jaffe D.B."/>
            <person name="Jones M."/>
            <person name="Kamal M."/>
            <person name="Khodiyar V.K."/>
            <person name="LaButti K."/>
            <person name="Laird G."/>
            <person name="Lehoczky J."/>
            <person name="Liu X."/>
            <person name="Lokyitsang T."/>
            <person name="Loveland J."/>
            <person name="Lui A."/>
            <person name="Macdonald P."/>
            <person name="Major J.E."/>
            <person name="Matthews L."/>
            <person name="Mauceli E."/>
            <person name="McCarroll S.A."/>
            <person name="Mihalev A.H."/>
            <person name="Mudge J."/>
            <person name="Nguyen C."/>
            <person name="Nicol R."/>
            <person name="O'Leary S.B."/>
            <person name="Osoegawa K."/>
            <person name="Schwartz D.C."/>
            <person name="Shaw-Smith C."/>
            <person name="Stankiewicz P."/>
            <person name="Steward C."/>
            <person name="Swarbreck D."/>
            <person name="Venkataraman V."/>
            <person name="Whittaker C.A."/>
            <person name="Yang X."/>
            <person name="Zimmer A.R."/>
            <person name="Bradley A."/>
            <person name="Hubbard T."/>
            <person name="Birren B.W."/>
            <person name="Rogers J."/>
            <person name="Lander E.S."/>
            <person name="Nusbaum C."/>
        </authorList>
    </citation>
    <scope>NUCLEOTIDE SEQUENCE [LARGE SCALE GENOMIC DNA]</scope>
</reference>
<reference key="4">
    <citation type="submission" date="2005-09" db="EMBL/GenBank/DDBJ databases">
        <authorList>
            <person name="Mural R.J."/>
            <person name="Istrail S."/>
            <person name="Sutton G."/>
            <person name="Florea L."/>
            <person name="Halpern A.L."/>
            <person name="Mobarry C.M."/>
            <person name="Lippert R."/>
            <person name="Walenz B."/>
            <person name="Shatkay H."/>
            <person name="Dew I."/>
            <person name="Miller J.R."/>
            <person name="Flanigan M.J."/>
            <person name="Edwards N.J."/>
            <person name="Bolanos R."/>
            <person name="Fasulo D."/>
            <person name="Halldorsson B.V."/>
            <person name="Hannenhalli S."/>
            <person name="Turner R."/>
            <person name="Yooseph S."/>
            <person name="Lu F."/>
            <person name="Nusskern D.R."/>
            <person name="Shue B.C."/>
            <person name="Zheng X.H."/>
            <person name="Zhong F."/>
            <person name="Delcher A.L."/>
            <person name="Huson D.H."/>
            <person name="Kravitz S.A."/>
            <person name="Mouchard L."/>
            <person name="Reinert K."/>
            <person name="Remington K.A."/>
            <person name="Clark A.G."/>
            <person name="Waterman M.S."/>
            <person name="Eichler E.E."/>
            <person name="Adams M.D."/>
            <person name="Hunkapiller M.W."/>
            <person name="Myers E.W."/>
            <person name="Venter J.C."/>
        </authorList>
    </citation>
    <scope>NUCLEOTIDE SEQUENCE [LARGE SCALE GENOMIC DNA]</scope>
</reference>
<reference key="5">
    <citation type="journal article" date="2004" name="Genome Res.">
        <title>The status, quality, and expansion of the NIH full-length cDNA project: the Mammalian Gene Collection (MGC).</title>
        <authorList>
            <consortium name="The MGC Project Team"/>
        </authorList>
    </citation>
    <scope>NUCLEOTIDE SEQUENCE [LARGE SCALE MRNA] (ISOFORM 1)</scope>
</reference>
<reference key="6">
    <citation type="journal article" date="2013" name="Am. J. Hum. Genet.">
        <title>Mutations in MEOX1, encoding mesenchyme homeobox 1, cause Klippel-Feil anomaly.</title>
        <authorList>
            <person name="Mohamed J.Y."/>
            <person name="Faqeih E."/>
            <person name="Alsiddiky A."/>
            <person name="Alshammari M.J."/>
            <person name="Ibrahim N.A."/>
            <person name="Alkuraya F.S."/>
        </authorList>
    </citation>
    <scope>INVOLVEMENT IN KFS2</scope>
    <scope>FUNCTION</scope>
</reference>
<reference key="7">
    <citation type="journal article" date="2013" name="BMC Genet.">
        <title>Mutation in MEOX1 gene causes a recessive Klippel-Feil syndrome subtype.</title>
        <authorList>
            <person name="Bayrakli F."/>
            <person name="Guclu B."/>
            <person name="Yakicier C."/>
            <person name="Balaban H."/>
            <person name="Kartal U."/>
            <person name="Erguner B."/>
            <person name="Sagiroglu M.S."/>
            <person name="Yuksel S."/>
            <person name="Ozturk A.R."/>
            <person name="Kazanci B."/>
            <person name="Ozum U."/>
            <person name="Kars H.Z."/>
        </authorList>
    </citation>
    <scope>INVOLVEMENT IN KFS2</scope>
    <scope>FUNCTION</scope>
</reference>
<proteinExistence type="evidence at protein level"/>
<accession>P50221</accession>
<accession>A8K524</accession>
<accession>A8MWF9</accession>
<accession>Q15069</accession>
<sequence>MDPAASSCMRSLQPPAPVWGCLRNPHSEGNGASGLPHYPPTPFSFHQKPDFLATATAAYPDFSASCLAATPHSLPQEEHIFTEQHPAFPQSPNWHFPVSDARRRPNSGPAGGSKEMGTSSLGLVDTTGGPGDDYGVLGSTANETEKKSSRRRKESSDNQENRGKPEGSSKARKERTAFTKEQLRELEAEFAHHNYLTRLRRYEIAVNLDLSERQVKVWFQNRRMKWKRVKGGQPISPNGQDPEDGDSTASPSSE</sequence>
<keyword id="KW-0010">Activator</keyword>
<keyword id="KW-0025">Alternative splicing</keyword>
<keyword id="KW-0963">Cytoplasm</keyword>
<keyword id="KW-0217">Developmental protein</keyword>
<keyword id="KW-0238">DNA-binding</keyword>
<keyword id="KW-0371">Homeobox</keyword>
<keyword id="KW-0539">Nucleus</keyword>
<keyword id="KW-1267">Proteomics identification</keyword>
<keyword id="KW-1185">Reference proteome</keyword>
<keyword id="KW-0678">Repressor</keyword>
<keyword id="KW-0804">Transcription</keyword>
<keyword id="KW-0805">Transcription regulation</keyword>